<gene>
    <name evidence="1" type="primary">glyA</name>
    <name type="ordered locus">PMM0258</name>
</gene>
<sequence length="423" mass="46407">MNILQNLKESDPIISNLINSEKNRQETHLELIASENFASMAVMQAQGSVLTNKYAEGLPQKRYYGGCEFVDEIEELAIERAKQLFDADWANVQPHSGAQANAAVFLSLLKPGDTILGMDLSHGGHLTHGSPVNMSGKWFNAVHYGVDKETNKLNFNEIRDIALATKPKLIICGYSAYPRKIDFESFRRIADEVGAFLMADIAHIAGLVATKLHPNPIPYCDVVTTTTHKTLRGPRGGLILCKDKEFGKKFDKSVFPGTQGGPLEHIIAAKAVAFGEALKPNFVNYSKQVINNAKVLSSTLIKRGIDIVSGGTDNHIVLLDLRSINMTGKVADLLVSEVNITANKNTVPFDPESPFVTSGLRLGTAALTTRGFNDDAFVEVGEIIADRLLNPDDLLTEKKCKERVLTLCNRFPLYEVELEASIK</sequence>
<dbReference type="EC" id="2.1.2.1" evidence="1"/>
<dbReference type="EMBL" id="BX548174">
    <property type="protein sequence ID" value="CAE18717.1"/>
    <property type="molecule type" value="Genomic_DNA"/>
</dbReference>
<dbReference type="RefSeq" id="WP_011131895.1">
    <property type="nucleotide sequence ID" value="NC_005072.1"/>
</dbReference>
<dbReference type="SMR" id="Q7V335"/>
<dbReference type="STRING" id="59919.PMM0258"/>
<dbReference type="KEGG" id="pmm:PMM0258"/>
<dbReference type="eggNOG" id="COG0112">
    <property type="taxonomic scope" value="Bacteria"/>
</dbReference>
<dbReference type="HOGENOM" id="CLU_022477_2_1_3"/>
<dbReference type="OrthoDB" id="9803846at2"/>
<dbReference type="UniPathway" id="UPA00193"/>
<dbReference type="UniPathway" id="UPA00288">
    <property type="reaction ID" value="UER01023"/>
</dbReference>
<dbReference type="Proteomes" id="UP000001026">
    <property type="component" value="Chromosome"/>
</dbReference>
<dbReference type="GO" id="GO:0005829">
    <property type="term" value="C:cytosol"/>
    <property type="evidence" value="ECO:0007669"/>
    <property type="project" value="TreeGrafter"/>
</dbReference>
<dbReference type="GO" id="GO:0004372">
    <property type="term" value="F:glycine hydroxymethyltransferase activity"/>
    <property type="evidence" value="ECO:0007669"/>
    <property type="project" value="UniProtKB-UniRule"/>
</dbReference>
<dbReference type="GO" id="GO:0030170">
    <property type="term" value="F:pyridoxal phosphate binding"/>
    <property type="evidence" value="ECO:0007669"/>
    <property type="project" value="UniProtKB-UniRule"/>
</dbReference>
<dbReference type="GO" id="GO:0019264">
    <property type="term" value="P:glycine biosynthetic process from serine"/>
    <property type="evidence" value="ECO:0007669"/>
    <property type="project" value="UniProtKB-UniRule"/>
</dbReference>
<dbReference type="GO" id="GO:0035999">
    <property type="term" value="P:tetrahydrofolate interconversion"/>
    <property type="evidence" value="ECO:0007669"/>
    <property type="project" value="UniProtKB-UniRule"/>
</dbReference>
<dbReference type="CDD" id="cd00378">
    <property type="entry name" value="SHMT"/>
    <property type="match status" value="1"/>
</dbReference>
<dbReference type="FunFam" id="3.40.640.10:FF:000001">
    <property type="entry name" value="Serine hydroxymethyltransferase"/>
    <property type="match status" value="1"/>
</dbReference>
<dbReference type="Gene3D" id="3.90.1150.10">
    <property type="entry name" value="Aspartate Aminotransferase, domain 1"/>
    <property type="match status" value="1"/>
</dbReference>
<dbReference type="Gene3D" id="3.40.640.10">
    <property type="entry name" value="Type I PLP-dependent aspartate aminotransferase-like (Major domain)"/>
    <property type="match status" value="1"/>
</dbReference>
<dbReference type="HAMAP" id="MF_00051">
    <property type="entry name" value="SHMT"/>
    <property type="match status" value="1"/>
</dbReference>
<dbReference type="InterPro" id="IPR015424">
    <property type="entry name" value="PyrdxlP-dep_Trfase"/>
</dbReference>
<dbReference type="InterPro" id="IPR015421">
    <property type="entry name" value="PyrdxlP-dep_Trfase_major"/>
</dbReference>
<dbReference type="InterPro" id="IPR015422">
    <property type="entry name" value="PyrdxlP-dep_Trfase_small"/>
</dbReference>
<dbReference type="InterPro" id="IPR001085">
    <property type="entry name" value="Ser_HO-MeTrfase"/>
</dbReference>
<dbReference type="InterPro" id="IPR049943">
    <property type="entry name" value="Ser_HO-MeTrfase-like"/>
</dbReference>
<dbReference type="InterPro" id="IPR019798">
    <property type="entry name" value="Ser_HO-MeTrfase_PLP_BS"/>
</dbReference>
<dbReference type="InterPro" id="IPR039429">
    <property type="entry name" value="SHMT-like_dom"/>
</dbReference>
<dbReference type="NCBIfam" id="NF000586">
    <property type="entry name" value="PRK00011.1"/>
    <property type="match status" value="1"/>
</dbReference>
<dbReference type="PANTHER" id="PTHR11680">
    <property type="entry name" value="SERINE HYDROXYMETHYLTRANSFERASE"/>
    <property type="match status" value="1"/>
</dbReference>
<dbReference type="PANTHER" id="PTHR11680:SF35">
    <property type="entry name" value="SERINE HYDROXYMETHYLTRANSFERASE 1"/>
    <property type="match status" value="1"/>
</dbReference>
<dbReference type="Pfam" id="PF00464">
    <property type="entry name" value="SHMT"/>
    <property type="match status" value="1"/>
</dbReference>
<dbReference type="PIRSF" id="PIRSF000412">
    <property type="entry name" value="SHMT"/>
    <property type="match status" value="1"/>
</dbReference>
<dbReference type="SUPFAM" id="SSF53383">
    <property type="entry name" value="PLP-dependent transferases"/>
    <property type="match status" value="1"/>
</dbReference>
<dbReference type="PROSITE" id="PS00096">
    <property type="entry name" value="SHMT"/>
    <property type="match status" value="1"/>
</dbReference>
<feature type="chain" id="PRO_0000113636" description="Serine hydroxymethyltransferase">
    <location>
        <begin position="1"/>
        <end position="423"/>
    </location>
</feature>
<feature type="binding site" evidence="1">
    <location>
        <position position="120"/>
    </location>
    <ligand>
        <name>(6S)-5,6,7,8-tetrahydrofolate</name>
        <dbReference type="ChEBI" id="CHEBI:57453"/>
    </ligand>
</feature>
<feature type="binding site" evidence="1">
    <location>
        <begin position="124"/>
        <end position="126"/>
    </location>
    <ligand>
        <name>(6S)-5,6,7,8-tetrahydrofolate</name>
        <dbReference type="ChEBI" id="CHEBI:57453"/>
    </ligand>
</feature>
<feature type="binding site" evidence="1">
    <location>
        <begin position="353"/>
        <end position="355"/>
    </location>
    <ligand>
        <name>(6S)-5,6,7,8-tetrahydrofolate</name>
        <dbReference type="ChEBI" id="CHEBI:57453"/>
    </ligand>
</feature>
<feature type="site" description="Plays an important role in substrate specificity" evidence="1">
    <location>
        <position position="228"/>
    </location>
</feature>
<feature type="modified residue" description="N6-(pyridoxal phosphate)lysine" evidence="1">
    <location>
        <position position="229"/>
    </location>
</feature>
<comment type="function">
    <text evidence="1">Catalyzes the reversible interconversion of serine and glycine with tetrahydrofolate (THF) serving as the one-carbon carrier. This reaction serves as the major source of one-carbon groups required for the biosynthesis of purines, thymidylate, methionine, and other important biomolecules. Also exhibits THF-independent aldolase activity toward beta-hydroxyamino acids, producing glycine and aldehydes, via a retro-aldol mechanism.</text>
</comment>
<comment type="catalytic activity">
    <reaction evidence="1">
        <text>(6R)-5,10-methylene-5,6,7,8-tetrahydrofolate + glycine + H2O = (6S)-5,6,7,8-tetrahydrofolate + L-serine</text>
        <dbReference type="Rhea" id="RHEA:15481"/>
        <dbReference type="ChEBI" id="CHEBI:15377"/>
        <dbReference type="ChEBI" id="CHEBI:15636"/>
        <dbReference type="ChEBI" id="CHEBI:33384"/>
        <dbReference type="ChEBI" id="CHEBI:57305"/>
        <dbReference type="ChEBI" id="CHEBI:57453"/>
        <dbReference type="EC" id="2.1.2.1"/>
    </reaction>
</comment>
<comment type="cofactor">
    <cofactor evidence="1">
        <name>pyridoxal 5'-phosphate</name>
        <dbReference type="ChEBI" id="CHEBI:597326"/>
    </cofactor>
</comment>
<comment type="pathway">
    <text evidence="1">One-carbon metabolism; tetrahydrofolate interconversion.</text>
</comment>
<comment type="pathway">
    <text evidence="1">Amino-acid biosynthesis; glycine biosynthesis; glycine from L-serine: step 1/1.</text>
</comment>
<comment type="subunit">
    <text evidence="1">Homodimer.</text>
</comment>
<comment type="subcellular location">
    <subcellularLocation>
        <location evidence="1">Cytoplasm</location>
    </subcellularLocation>
</comment>
<comment type="similarity">
    <text evidence="1">Belongs to the SHMT family.</text>
</comment>
<proteinExistence type="inferred from homology"/>
<keyword id="KW-0028">Amino-acid biosynthesis</keyword>
<keyword id="KW-0963">Cytoplasm</keyword>
<keyword id="KW-0554">One-carbon metabolism</keyword>
<keyword id="KW-0663">Pyridoxal phosphate</keyword>
<keyword id="KW-0808">Transferase</keyword>
<reference key="1">
    <citation type="journal article" date="2003" name="Nature">
        <title>Genome divergence in two Prochlorococcus ecotypes reflects oceanic niche differentiation.</title>
        <authorList>
            <person name="Rocap G."/>
            <person name="Larimer F.W."/>
            <person name="Lamerdin J.E."/>
            <person name="Malfatti S."/>
            <person name="Chain P."/>
            <person name="Ahlgren N.A."/>
            <person name="Arellano A."/>
            <person name="Coleman M."/>
            <person name="Hauser L."/>
            <person name="Hess W.R."/>
            <person name="Johnson Z.I."/>
            <person name="Land M.L."/>
            <person name="Lindell D."/>
            <person name="Post A.F."/>
            <person name="Regala W."/>
            <person name="Shah M."/>
            <person name="Shaw S.L."/>
            <person name="Steglich C."/>
            <person name="Sullivan M.B."/>
            <person name="Ting C.S."/>
            <person name="Tolonen A."/>
            <person name="Webb E.A."/>
            <person name="Zinser E.R."/>
            <person name="Chisholm S.W."/>
        </authorList>
    </citation>
    <scope>NUCLEOTIDE SEQUENCE [LARGE SCALE GENOMIC DNA]</scope>
    <source>
        <strain>CCMP1986 / NIES-2087 / MED4</strain>
    </source>
</reference>
<accession>Q7V335</accession>
<protein>
    <recommendedName>
        <fullName evidence="1">Serine hydroxymethyltransferase</fullName>
        <shortName evidence="1">SHMT</shortName>
        <shortName evidence="1">Serine methylase</shortName>
        <ecNumber evidence="1">2.1.2.1</ecNumber>
    </recommendedName>
</protein>
<organism>
    <name type="scientific">Prochlorococcus marinus subsp. pastoris (strain CCMP1986 / NIES-2087 / MED4)</name>
    <dbReference type="NCBI Taxonomy" id="59919"/>
    <lineage>
        <taxon>Bacteria</taxon>
        <taxon>Bacillati</taxon>
        <taxon>Cyanobacteriota</taxon>
        <taxon>Cyanophyceae</taxon>
        <taxon>Synechococcales</taxon>
        <taxon>Prochlorococcaceae</taxon>
        <taxon>Prochlorococcus</taxon>
    </lineage>
</organism>
<name>GLYA_PROMP</name>
<evidence type="ECO:0000255" key="1">
    <source>
        <dbReference type="HAMAP-Rule" id="MF_00051"/>
    </source>
</evidence>